<gene>
    <name evidence="1" type="primary">tsf</name>
    <name type="ordered locus">AnaeK_0283</name>
</gene>
<comment type="function">
    <text evidence="1">Associates with the EF-Tu.GDP complex and induces the exchange of GDP to GTP. It remains bound to the aminoacyl-tRNA.EF-Tu.GTP complex up to the GTP hydrolysis stage on the ribosome.</text>
</comment>
<comment type="subcellular location">
    <subcellularLocation>
        <location evidence="1">Cytoplasm</location>
    </subcellularLocation>
</comment>
<comment type="similarity">
    <text evidence="1">Belongs to the EF-Ts family.</text>
</comment>
<protein>
    <recommendedName>
        <fullName evidence="1">Elongation factor Ts</fullName>
        <shortName evidence="1">EF-Ts</shortName>
    </recommendedName>
</protein>
<reference key="1">
    <citation type="submission" date="2008-08" db="EMBL/GenBank/DDBJ databases">
        <title>Complete sequence of Anaeromyxobacter sp. K.</title>
        <authorList>
            <consortium name="US DOE Joint Genome Institute"/>
            <person name="Lucas S."/>
            <person name="Copeland A."/>
            <person name="Lapidus A."/>
            <person name="Glavina del Rio T."/>
            <person name="Dalin E."/>
            <person name="Tice H."/>
            <person name="Bruce D."/>
            <person name="Goodwin L."/>
            <person name="Pitluck S."/>
            <person name="Saunders E."/>
            <person name="Brettin T."/>
            <person name="Detter J.C."/>
            <person name="Han C."/>
            <person name="Larimer F."/>
            <person name="Land M."/>
            <person name="Hauser L."/>
            <person name="Kyrpides N."/>
            <person name="Ovchinnikiva G."/>
            <person name="Beliaev A."/>
        </authorList>
    </citation>
    <scope>NUCLEOTIDE SEQUENCE [LARGE SCALE GENOMIC DNA]</scope>
    <source>
        <strain>K</strain>
    </source>
</reference>
<name>EFTS_ANASK</name>
<feature type="chain" id="PRO_1000116686" description="Elongation factor Ts">
    <location>
        <begin position="1"/>
        <end position="219"/>
    </location>
</feature>
<feature type="region of interest" description="Involved in Mg(2+) ion dislocation from EF-Tu" evidence="1">
    <location>
        <begin position="82"/>
        <end position="85"/>
    </location>
</feature>
<organism>
    <name type="scientific">Anaeromyxobacter sp. (strain K)</name>
    <dbReference type="NCBI Taxonomy" id="447217"/>
    <lineage>
        <taxon>Bacteria</taxon>
        <taxon>Pseudomonadati</taxon>
        <taxon>Myxococcota</taxon>
        <taxon>Myxococcia</taxon>
        <taxon>Myxococcales</taxon>
        <taxon>Cystobacterineae</taxon>
        <taxon>Anaeromyxobacteraceae</taxon>
        <taxon>Anaeromyxobacter</taxon>
    </lineage>
</organism>
<evidence type="ECO:0000255" key="1">
    <source>
        <dbReference type="HAMAP-Rule" id="MF_00050"/>
    </source>
</evidence>
<proteinExistence type="inferred from homology"/>
<accession>B4UMB7</accession>
<keyword id="KW-0963">Cytoplasm</keyword>
<keyword id="KW-0251">Elongation factor</keyword>
<keyword id="KW-0648">Protein biosynthesis</keyword>
<dbReference type="EMBL" id="CP001131">
    <property type="protein sequence ID" value="ACG71525.1"/>
    <property type="molecule type" value="Genomic_DNA"/>
</dbReference>
<dbReference type="RefSeq" id="WP_012524360.1">
    <property type="nucleotide sequence ID" value="NC_011145.1"/>
</dbReference>
<dbReference type="SMR" id="B4UMB7"/>
<dbReference type="KEGG" id="ank:AnaeK_0283"/>
<dbReference type="HOGENOM" id="CLU_047155_1_1_7"/>
<dbReference type="OrthoDB" id="9808348at2"/>
<dbReference type="Proteomes" id="UP000001871">
    <property type="component" value="Chromosome"/>
</dbReference>
<dbReference type="GO" id="GO:0005737">
    <property type="term" value="C:cytoplasm"/>
    <property type="evidence" value="ECO:0007669"/>
    <property type="project" value="UniProtKB-SubCell"/>
</dbReference>
<dbReference type="GO" id="GO:0003746">
    <property type="term" value="F:translation elongation factor activity"/>
    <property type="evidence" value="ECO:0007669"/>
    <property type="project" value="UniProtKB-UniRule"/>
</dbReference>
<dbReference type="CDD" id="cd14275">
    <property type="entry name" value="UBA_EF-Ts"/>
    <property type="match status" value="1"/>
</dbReference>
<dbReference type="FunFam" id="1.10.286.20:FF:000001">
    <property type="entry name" value="Elongation factor Ts"/>
    <property type="match status" value="1"/>
</dbReference>
<dbReference type="FunFam" id="1.10.8.10:FF:000001">
    <property type="entry name" value="Elongation factor Ts"/>
    <property type="match status" value="1"/>
</dbReference>
<dbReference type="Gene3D" id="1.10.286.20">
    <property type="match status" value="1"/>
</dbReference>
<dbReference type="Gene3D" id="1.10.8.10">
    <property type="entry name" value="DNA helicase RuvA subunit, C-terminal domain"/>
    <property type="match status" value="1"/>
</dbReference>
<dbReference type="Gene3D" id="3.30.479.20">
    <property type="entry name" value="Elongation factor Ts, dimerisation domain"/>
    <property type="match status" value="1"/>
</dbReference>
<dbReference type="HAMAP" id="MF_00050">
    <property type="entry name" value="EF_Ts"/>
    <property type="match status" value="1"/>
</dbReference>
<dbReference type="InterPro" id="IPR036402">
    <property type="entry name" value="EF-Ts_dimer_sf"/>
</dbReference>
<dbReference type="InterPro" id="IPR001816">
    <property type="entry name" value="Transl_elong_EFTs/EF1B"/>
</dbReference>
<dbReference type="InterPro" id="IPR014039">
    <property type="entry name" value="Transl_elong_EFTs/EF1B_dimer"/>
</dbReference>
<dbReference type="InterPro" id="IPR018101">
    <property type="entry name" value="Transl_elong_Ts_CS"/>
</dbReference>
<dbReference type="InterPro" id="IPR009060">
    <property type="entry name" value="UBA-like_sf"/>
</dbReference>
<dbReference type="NCBIfam" id="TIGR00116">
    <property type="entry name" value="tsf"/>
    <property type="match status" value="2"/>
</dbReference>
<dbReference type="PANTHER" id="PTHR11741">
    <property type="entry name" value="ELONGATION FACTOR TS"/>
    <property type="match status" value="1"/>
</dbReference>
<dbReference type="PANTHER" id="PTHR11741:SF0">
    <property type="entry name" value="ELONGATION FACTOR TS, MITOCHONDRIAL"/>
    <property type="match status" value="1"/>
</dbReference>
<dbReference type="Pfam" id="PF00889">
    <property type="entry name" value="EF_TS"/>
    <property type="match status" value="1"/>
</dbReference>
<dbReference type="SUPFAM" id="SSF54713">
    <property type="entry name" value="Elongation factor Ts (EF-Ts), dimerisation domain"/>
    <property type="match status" value="1"/>
</dbReference>
<dbReference type="SUPFAM" id="SSF46934">
    <property type="entry name" value="UBA-like"/>
    <property type="match status" value="1"/>
</dbReference>
<dbReference type="PROSITE" id="PS01126">
    <property type="entry name" value="EF_TS_1"/>
    <property type="match status" value="1"/>
</dbReference>
<dbReference type="PROSITE" id="PS01127">
    <property type="entry name" value="EF_TS_2"/>
    <property type="match status" value="1"/>
</dbReference>
<sequence length="219" mass="23936">MAEISAKMVQELREKTGAGMMDCKKALTEAGGDLAKAEEVLRKKGLSAAAKKTGRAATEGAVASYIHMGGKIGVLVEVNCETDFVARTEGFQGLVKEIAMQIAAASPRWVRREEVPADVVAKELEIAKAQAREQKKPEAILEKIATGKVEKFYSEFCLMEQAWVKDDKKKIQDVLTDAVAKIGENIQIRRFARFVLGEGLEKKQENLAEEVAKAAGLQK</sequence>